<comment type="function">
    <text evidence="1">Acts as a chaperone.</text>
</comment>
<comment type="induction">
    <text evidence="1">By stress conditions e.g. heat shock.</text>
</comment>
<comment type="similarity">
    <text evidence="1">Belongs to the heat shock protein 70 family.</text>
</comment>
<dbReference type="EMBL" id="CP001029">
    <property type="protein sequence ID" value="ACB81294.1"/>
    <property type="molecule type" value="Genomic_DNA"/>
</dbReference>
<dbReference type="RefSeq" id="WP_012455011.1">
    <property type="nucleotide sequence ID" value="NC_010725.1"/>
</dbReference>
<dbReference type="SMR" id="B1ZGR1"/>
<dbReference type="STRING" id="441620.Mpop_3142"/>
<dbReference type="KEGG" id="mpo:Mpop_3142"/>
<dbReference type="eggNOG" id="COG0443">
    <property type="taxonomic scope" value="Bacteria"/>
</dbReference>
<dbReference type="HOGENOM" id="CLU_005965_2_1_5"/>
<dbReference type="OrthoDB" id="9766019at2"/>
<dbReference type="Proteomes" id="UP000007136">
    <property type="component" value="Chromosome"/>
</dbReference>
<dbReference type="GO" id="GO:0005524">
    <property type="term" value="F:ATP binding"/>
    <property type="evidence" value="ECO:0007669"/>
    <property type="project" value="UniProtKB-UniRule"/>
</dbReference>
<dbReference type="GO" id="GO:0140662">
    <property type="term" value="F:ATP-dependent protein folding chaperone"/>
    <property type="evidence" value="ECO:0007669"/>
    <property type="project" value="InterPro"/>
</dbReference>
<dbReference type="GO" id="GO:0051082">
    <property type="term" value="F:unfolded protein binding"/>
    <property type="evidence" value="ECO:0007669"/>
    <property type="project" value="InterPro"/>
</dbReference>
<dbReference type="CDD" id="cd11733">
    <property type="entry name" value="ASKHA_NBD_HSP70_HSPA9"/>
    <property type="match status" value="1"/>
</dbReference>
<dbReference type="FunFam" id="2.60.34.10:FF:000014">
    <property type="entry name" value="Chaperone protein DnaK HSP70"/>
    <property type="match status" value="1"/>
</dbReference>
<dbReference type="FunFam" id="3.30.420.40:FF:000020">
    <property type="entry name" value="Chaperone protein HscA homolog"/>
    <property type="match status" value="1"/>
</dbReference>
<dbReference type="FunFam" id="1.20.1270.10:FF:000001">
    <property type="entry name" value="Molecular chaperone DnaK"/>
    <property type="match status" value="1"/>
</dbReference>
<dbReference type="FunFam" id="3.30.420.40:FF:000004">
    <property type="entry name" value="Molecular chaperone DnaK"/>
    <property type="match status" value="1"/>
</dbReference>
<dbReference type="FunFam" id="3.90.640.10:FF:000003">
    <property type="entry name" value="Molecular chaperone DnaK"/>
    <property type="match status" value="1"/>
</dbReference>
<dbReference type="Gene3D" id="1.20.1270.10">
    <property type="match status" value="1"/>
</dbReference>
<dbReference type="Gene3D" id="3.30.420.40">
    <property type="match status" value="2"/>
</dbReference>
<dbReference type="Gene3D" id="3.90.640.10">
    <property type="entry name" value="Actin, Chain A, domain 4"/>
    <property type="match status" value="1"/>
</dbReference>
<dbReference type="Gene3D" id="2.60.34.10">
    <property type="entry name" value="Substrate Binding Domain Of DNAk, Chain A, domain 1"/>
    <property type="match status" value="1"/>
</dbReference>
<dbReference type="HAMAP" id="MF_00332">
    <property type="entry name" value="DnaK"/>
    <property type="match status" value="1"/>
</dbReference>
<dbReference type="InterPro" id="IPR043129">
    <property type="entry name" value="ATPase_NBD"/>
</dbReference>
<dbReference type="InterPro" id="IPR012725">
    <property type="entry name" value="Chaperone_DnaK"/>
</dbReference>
<dbReference type="InterPro" id="IPR018181">
    <property type="entry name" value="Heat_shock_70_CS"/>
</dbReference>
<dbReference type="InterPro" id="IPR029048">
    <property type="entry name" value="HSP70_C_sf"/>
</dbReference>
<dbReference type="InterPro" id="IPR029047">
    <property type="entry name" value="HSP70_peptide-bd_sf"/>
</dbReference>
<dbReference type="InterPro" id="IPR013126">
    <property type="entry name" value="Hsp_70_fam"/>
</dbReference>
<dbReference type="NCBIfam" id="NF001413">
    <property type="entry name" value="PRK00290.1"/>
    <property type="match status" value="1"/>
</dbReference>
<dbReference type="NCBIfam" id="NF003520">
    <property type="entry name" value="PRK05183.1"/>
    <property type="match status" value="1"/>
</dbReference>
<dbReference type="NCBIfam" id="TIGR02350">
    <property type="entry name" value="prok_dnaK"/>
    <property type="match status" value="1"/>
</dbReference>
<dbReference type="PANTHER" id="PTHR19375">
    <property type="entry name" value="HEAT SHOCK PROTEIN 70KDA"/>
    <property type="match status" value="1"/>
</dbReference>
<dbReference type="Pfam" id="PF00012">
    <property type="entry name" value="HSP70"/>
    <property type="match status" value="1"/>
</dbReference>
<dbReference type="PRINTS" id="PR00301">
    <property type="entry name" value="HEATSHOCK70"/>
</dbReference>
<dbReference type="SUPFAM" id="SSF53067">
    <property type="entry name" value="Actin-like ATPase domain"/>
    <property type="match status" value="2"/>
</dbReference>
<dbReference type="SUPFAM" id="SSF100934">
    <property type="entry name" value="Heat shock protein 70kD (HSP70), C-terminal subdomain"/>
    <property type="match status" value="1"/>
</dbReference>
<dbReference type="SUPFAM" id="SSF100920">
    <property type="entry name" value="Heat shock protein 70kD (HSP70), peptide-binding domain"/>
    <property type="match status" value="1"/>
</dbReference>
<dbReference type="PROSITE" id="PS00297">
    <property type="entry name" value="HSP70_1"/>
    <property type="match status" value="1"/>
</dbReference>
<dbReference type="PROSITE" id="PS00329">
    <property type="entry name" value="HSP70_2"/>
    <property type="match status" value="1"/>
</dbReference>
<dbReference type="PROSITE" id="PS01036">
    <property type="entry name" value="HSP70_3"/>
    <property type="match status" value="1"/>
</dbReference>
<proteinExistence type="inferred from homology"/>
<gene>
    <name evidence="1" type="primary">dnaK</name>
    <name type="ordered locus">Mpop_3142</name>
</gene>
<evidence type="ECO:0000255" key="1">
    <source>
        <dbReference type="HAMAP-Rule" id="MF_00332"/>
    </source>
</evidence>
<evidence type="ECO:0000256" key="2">
    <source>
        <dbReference type="SAM" id="MobiDB-lite"/>
    </source>
</evidence>
<protein>
    <recommendedName>
        <fullName evidence="1">Chaperone protein DnaK</fullName>
    </recommendedName>
    <alternativeName>
        <fullName evidence="1">HSP70</fullName>
    </alternativeName>
    <alternativeName>
        <fullName evidence="1">Heat shock 70 kDa protein</fullName>
    </alternativeName>
    <alternativeName>
        <fullName evidence="1">Heat shock protein 70</fullName>
    </alternativeName>
</protein>
<name>DNAK_METPB</name>
<feature type="chain" id="PRO_1000119729" description="Chaperone protein DnaK">
    <location>
        <begin position="1"/>
        <end position="639"/>
    </location>
</feature>
<feature type="region of interest" description="Disordered" evidence="2">
    <location>
        <begin position="599"/>
        <end position="639"/>
    </location>
</feature>
<feature type="compositionally biased region" description="Low complexity" evidence="2">
    <location>
        <begin position="599"/>
        <end position="615"/>
    </location>
</feature>
<feature type="compositionally biased region" description="Acidic residues" evidence="2">
    <location>
        <begin position="623"/>
        <end position="632"/>
    </location>
</feature>
<feature type="modified residue" description="Phosphothreonine; by autocatalysis" evidence="1">
    <location>
        <position position="198"/>
    </location>
</feature>
<accession>B1ZGR1</accession>
<sequence>MGKVIGIDLGTTNSCVAVMEGTQPRVIENAEGARTTPSIVAFTDDGERLVGQPAKRQAVTNPERTFFAIKRLIGRTYDDPLTQKDKGLVPYKIARGDNGDAWVEADGKKYSPSQISAFTLQKMKETAESHLGQPVTQAVITVPAYFNDAQRQATKDAGKIAGLEVLRIINEPTAAALAYGLDKKKSGTIAVYDLGGGTFDVSILEIGDGVFEVKSTNGDTFLGGEDFDNRVVEYLTAEFKKEQGIDLTKDKLALQRLKEAAEKAKIELSSATQTEINLPYITADASGPKHLALKLSRAKFESLVDDLVQRTIEPCRKALKDAGVSASEIDEVVLVGGQTRMPKVQEVVKAFFGKEPHKGVNPDEVVAIGAAVQAGVLQGDVKDVLLLDVTPLSLGIETLGGVFTRLIDRNTTIPTKKSQVFSTAEDNQNAVTIRVFQGEREMAADNKLLGQFDLVGIPPAPRGMPQIEVTFDIDANGIVNVTAKDKATNKEHQIRIQASGGLSDADIEKMVKDAEANAEADKKRRELVEVKNQGESLIHATEKSVSEYGDKVSAADKGAIESAIAALRTALEGDDAEGIKAKTNDLMQASMKLGEAMYAASQAEGAPGAEGAAASGEKKDDVIDADFQEVDENERKKRA</sequence>
<organism>
    <name type="scientific">Methylorubrum populi (strain ATCC BAA-705 / NCIMB 13946 / BJ001)</name>
    <name type="common">Methylobacterium populi</name>
    <dbReference type="NCBI Taxonomy" id="441620"/>
    <lineage>
        <taxon>Bacteria</taxon>
        <taxon>Pseudomonadati</taxon>
        <taxon>Pseudomonadota</taxon>
        <taxon>Alphaproteobacteria</taxon>
        <taxon>Hyphomicrobiales</taxon>
        <taxon>Methylobacteriaceae</taxon>
        <taxon>Methylorubrum</taxon>
    </lineage>
</organism>
<keyword id="KW-0067">ATP-binding</keyword>
<keyword id="KW-0143">Chaperone</keyword>
<keyword id="KW-0547">Nucleotide-binding</keyword>
<keyword id="KW-0597">Phosphoprotein</keyword>
<keyword id="KW-0346">Stress response</keyword>
<reference key="1">
    <citation type="submission" date="2008-04" db="EMBL/GenBank/DDBJ databases">
        <title>Complete sequence of chromosome of Methylobacterium populi BJ001.</title>
        <authorList>
            <consortium name="US DOE Joint Genome Institute"/>
            <person name="Copeland A."/>
            <person name="Lucas S."/>
            <person name="Lapidus A."/>
            <person name="Glavina del Rio T."/>
            <person name="Dalin E."/>
            <person name="Tice H."/>
            <person name="Bruce D."/>
            <person name="Goodwin L."/>
            <person name="Pitluck S."/>
            <person name="Chertkov O."/>
            <person name="Brettin T."/>
            <person name="Detter J.C."/>
            <person name="Han C."/>
            <person name="Kuske C.R."/>
            <person name="Schmutz J."/>
            <person name="Larimer F."/>
            <person name="Land M."/>
            <person name="Hauser L."/>
            <person name="Kyrpides N."/>
            <person name="Mikhailova N."/>
            <person name="Marx C."/>
            <person name="Richardson P."/>
        </authorList>
    </citation>
    <scope>NUCLEOTIDE SEQUENCE [LARGE SCALE GENOMIC DNA]</scope>
    <source>
        <strain>ATCC BAA-705 / NCIMB 13946 / BJ001</strain>
    </source>
</reference>